<proteinExistence type="inferred from homology"/>
<reference key="1">
    <citation type="journal article" date="2003" name="Proc. Natl. Acad. Sci. U.S.A.">
        <title>The genome sequence of Blochmannia floridanus: comparative analysis of reduced genomes.</title>
        <authorList>
            <person name="Gil R."/>
            <person name="Silva F.J."/>
            <person name="Zientz E."/>
            <person name="Delmotte F."/>
            <person name="Gonzalez-Candelas F."/>
            <person name="Latorre A."/>
            <person name="Rausell C."/>
            <person name="Kamerbeek J."/>
            <person name="Gadau J."/>
            <person name="Hoelldobler B."/>
            <person name="van Ham R.C.H.J."/>
            <person name="Gross R."/>
            <person name="Moya A."/>
        </authorList>
    </citation>
    <scope>NUCLEOTIDE SEQUENCE [LARGE SCALE GENOMIC DNA]</scope>
</reference>
<keyword id="KW-0030">Aminoacyl-tRNA synthetase</keyword>
<keyword id="KW-0067">ATP-binding</keyword>
<keyword id="KW-0963">Cytoplasm</keyword>
<keyword id="KW-0436">Ligase</keyword>
<keyword id="KW-0547">Nucleotide-binding</keyword>
<keyword id="KW-0648">Protein biosynthesis</keyword>
<keyword id="KW-1185">Reference proteome</keyword>
<comment type="function">
    <text evidence="1">Catalyzes the attachment of proline to tRNA(Pro) in a two-step reaction: proline is first activated by ATP to form Pro-AMP and then transferred to the acceptor end of tRNA(Pro). As ProRS can inadvertently accommodate and process non-cognate amino acids such as alanine and cysteine, to avoid such errors it has two additional distinct editing activities against alanine. One activity is designated as 'pretransfer' editing and involves the tRNA(Pro)-independent hydrolysis of activated Ala-AMP. The other activity is designated 'posttransfer' editing and involves deacylation of mischarged Ala-tRNA(Pro). The misacylated Cys-tRNA(Pro) is not edited by ProRS.</text>
</comment>
<comment type="catalytic activity">
    <reaction evidence="1">
        <text>tRNA(Pro) + L-proline + ATP = L-prolyl-tRNA(Pro) + AMP + diphosphate</text>
        <dbReference type="Rhea" id="RHEA:14305"/>
        <dbReference type="Rhea" id="RHEA-COMP:9700"/>
        <dbReference type="Rhea" id="RHEA-COMP:9702"/>
        <dbReference type="ChEBI" id="CHEBI:30616"/>
        <dbReference type="ChEBI" id="CHEBI:33019"/>
        <dbReference type="ChEBI" id="CHEBI:60039"/>
        <dbReference type="ChEBI" id="CHEBI:78442"/>
        <dbReference type="ChEBI" id="CHEBI:78532"/>
        <dbReference type="ChEBI" id="CHEBI:456215"/>
        <dbReference type="EC" id="6.1.1.15"/>
    </reaction>
</comment>
<comment type="subunit">
    <text evidence="1">Homodimer.</text>
</comment>
<comment type="subcellular location">
    <subcellularLocation>
        <location evidence="1">Cytoplasm</location>
    </subcellularLocation>
</comment>
<comment type="domain">
    <text evidence="1">Consists of three domains: the N-terminal catalytic domain, the editing domain and the C-terminal anticodon-binding domain.</text>
</comment>
<comment type="similarity">
    <text evidence="1">Belongs to the class-II aminoacyl-tRNA synthetase family. ProS type 1 subfamily.</text>
</comment>
<organism>
    <name type="scientific">Blochmanniella floridana</name>
    <dbReference type="NCBI Taxonomy" id="203907"/>
    <lineage>
        <taxon>Bacteria</taxon>
        <taxon>Pseudomonadati</taxon>
        <taxon>Pseudomonadota</taxon>
        <taxon>Gammaproteobacteria</taxon>
        <taxon>Enterobacterales</taxon>
        <taxon>Enterobacteriaceae</taxon>
        <taxon>ant endosymbionts</taxon>
        <taxon>Candidatus Blochmanniella</taxon>
    </lineage>
</organism>
<accession>Q7VRC8</accession>
<gene>
    <name evidence="1" type="primary">proS</name>
    <name type="ordered locus">Bfl289</name>
</gene>
<sequence>MRTTQYLLATIKEIPKSCEPISHQLMLRSGMVRQISSGVYTWLPTGLRVLKKIENIIHEEMNKIGFLEIFMPITQPANLWKQSGRWSEYGLELLRFKNRTNQKFVLGPTHEEMITDLVCNEILSHKQFPIKLYQINTKYRDEARPQFGVIRSKEFIMKDGYSFHIHQKSLEDTYYNIYQQYHIIFKRIGLKFCVVQADPGNIGGIVSHEFQAYYNNTQNETAIFTETFNKDMSNINTRKNNDIVINNIHILNTIQTIKLTSADFHNLIIMRLINYYKSFIQETIKNIIIYIKNKNNIYNLHRIATQAYEKFNDLKLVKIPDIIIPISILNKKNIEIKLNLLKLINTPVPLMINYNVATAMYDFIFHNININKNYCMKINQTPNLSKITTNLYESNIKKINTNQIRKLLPIRNTIEIGHIFQLGKKYSNCINSCIQKKNKDNLNITMGCYGIGITRIVPMVIEQHHDKHGIIWPNEIAPFKLAIIPINMYRFINVQNTAEELYTQLSSIPVIGFDILLDDRKENPGIMFTDIDLLGIPHILIISERNLNNQEVEYKYRKTGIIQKIKLNLIIQFLTEKLMNN</sequence>
<dbReference type="EC" id="6.1.1.15" evidence="1"/>
<dbReference type="EMBL" id="BX248583">
    <property type="protein sequence ID" value="CAD83360.1"/>
    <property type="molecule type" value="Genomic_DNA"/>
</dbReference>
<dbReference type="SMR" id="Q7VRC8"/>
<dbReference type="STRING" id="203907.Bfl289"/>
<dbReference type="KEGG" id="bfl:Bfl289"/>
<dbReference type="eggNOG" id="COG0442">
    <property type="taxonomic scope" value="Bacteria"/>
</dbReference>
<dbReference type="HOGENOM" id="CLU_016739_0_0_6"/>
<dbReference type="OrthoDB" id="9809052at2"/>
<dbReference type="Proteomes" id="UP000002192">
    <property type="component" value="Chromosome"/>
</dbReference>
<dbReference type="GO" id="GO:0005829">
    <property type="term" value="C:cytosol"/>
    <property type="evidence" value="ECO:0007669"/>
    <property type="project" value="TreeGrafter"/>
</dbReference>
<dbReference type="GO" id="GO:0005524">
    <property type="term" value="F:ATP binding"/>
    <property type="evidence" value="ECO:0007669"/>
    <property type="project" value="UniProtKB-UniRule"/>
</dbReference>
<dbReference type="GO" id="GO:0004827">
    <property type="term" value="F:proline-tRNA ligase activity"/>
    <property type="evidence" value="ECO:0007669"/>
    <property type="project" value="UniProtKB-UniRule"/>
</dbReference>
<dbReference type="GO" id="GO:0006433">
    <property type="term" value="P:prolyl-tRNA aminoacylation"/>
    <property type="evidence" value="ECO:0007669"/>
    <property type="project" value="UniProtKB-UniRule"/>
</dbReference>
<dbReference type="CDD" id="cd00861">
    <property type="entry name" value="ProRS_anticodon_short"/>
    <property type="match status" value="1"/>
</dbReference>
<dbReference type="CDD" id="cd00779">
    <property type="entry name" value="ProRS_core_prok"/>
    <property type="match status" value="1"/>
</dbReference>
<dbReference type="Gene3D" id="3.40.50.800">
    <property type="entry name" value="Anticodon-binding domain"/>
    <property type="match status" value="1"/>
</dbReference>
<dbReference type="Gene3D" id="3.30.930.10">
    <property type="entry name" value="Bira Bifunctional Protein, Domain 2"/>
    <property type="match status" value="2"/>
</dbReference>
<dbReference type="HAMAP" id="MF_01569">
    <property type="entry name" value="Pro_tRNA_synth_type1"/>
    <property type="match status" value="1"/>
</dbReference>
<dbReference type="InterPro" id="IPR002314">
    <property type="entry name" value="aa-tRNA-synt_IIb"/>
</dbReference>
<dbReference type="InterPro" id="IPR006195">
    <property type="entry name" value="aa-tRNA-synth_II"/>
</dbReference>
<dbReference type="InterPro" id="IPR045864">
    <property type="entry name" value="aa-tRNA-synth_II/BPL/LPL"/>
</dbReference>
<dbReference type="InterPro" id="IPR004154">
    <property type="entry name" value="Anticodon-bd"/>
</dbReference>
<dbReference type="InterPro" id="IPR036621">
    <property type="entry name" value="Anticodon-bd_dom_sf"/>
</dbReference>
<dbReference type="InterPro" id="IPR002316">
    <property type="entry name" value="Pro-tRNA-ligase_IIa"/>
</dbReference>
<dbReference type="InterPro" id="IPR004500">
    <property type="entry name" value="Pro-tRNA-synth_IIa_bac-type"/>
</dbReference>
<dbReference type="InterPro" id="IPR023717">
    <property type="entry name" value="Pro-tRNA-Synthase_IIa_type1"/>
</dbReference>
<dbReference type="InterPro" id="IPR050062">
    <property type="entry name" value="Pro-tRNA_synthetase"/>
</dbReference>
<dbReference type="InterPro" id="IPR044140">
    <property type="entry name" value="ProRS_anticodon_short"/>
</dbReference>
<dbReference type="InterPro" id="IPR033730">
    <property type="entry name" value="ProRS_core_prok"/>
</dbReference>
<dbReference type="NCBIfam" id="NF006625">
    <property type="entry name" value="PRK09194.1"/>
    <property type="match status" value="1"/>
</dbReference>
<dbReference type="NCBIfam" id="TIGR00409">
    <property type="entry name" value="proS_fam_II"/>
    <property type="match status" value="1"/>
</dbReference>
<dbReference type="PANTHER" id="PTHR42753">
    <property type="entry name" value="MITOCHONDRIAL RIBOSOME PROTEIN L39/PROLYL-TRNA LIGASE FAMILY MEMBER"/>
    <property type="match status" value="1"/>
</dbReference>
<dbReference type="PANTHER" id="PTHR42753:SF2">
    <property type="entry name" value="PROLINE--TRNA LIGASE"/>
    <property type="match status" value="1"/>
</dbReference>
<dbReference type="Pfam" id="PF03129">
    <property type="entry name" value="HGTP_anticodon"/>
    <property type="match status" value="1"/>
</dbReference>
<dbReference type="Pfam" id="PF00587">
    <property type="entry name" value="tRNA-synt_2b"/>
    <property type="match status" value="1"/>
</dbReference>
<dbReference type="PRINTS" id="PR01046">
    <property type="entry name" value="TRNASYNTHPRO"/>
</dbReference>
<dbReference type="SUPFAM" id="SSF52954">
    <property type="entry name" value="Class II aaRS ABD-related"/>
    <property type="match status" value="1"/>
</dbReference>
<dbReference type="SUPFAM" id="SSF55681">
    <property type="entry name" value="Class II aaRS and biotin synthetases"/>
    <property type="match status" value="1"/>
</dbReference>
<dbReference type="PROSITE" id="PS50862">
    <property type="entry name" value="AA_TRNA_LIGASE_II"/>
    <property type="match status" value="1"/>
</dbReference>
<feature type="chain" id="PRO_0000248652" description="Proline--tRNA ligase">
    <location>
        <begin position="1"/>
        <end position="581"/>
    </location>
</feature>
<protein>
    <recommendedName>
        <fullName evidence="1">Proline--tRNA ligase</fullName>
        <ecNumber evidence="1">6.1.1.15</ecNumber>
    </recommendedName>
    <alternativeName>
        <fullName evidence="1">Prolyl-tRNA synthetase</fullName>
        <shortName evidence="1">ProRS</shortName>
    </alternativeName>
</protein>
<evidence type="ECO:0000255" key="1">
    <source>
        <dbReference type="HAMAP-Rule" id="MF_01569"/>
    </source>
</evidence>
<name>SYP_BLOFL</name>